<evidence type="ECO:0000255" key="1">
    <source>
        <dbReference type="HAMAP-Rule" id="MF_00149"/>
    </source>
</evidence>
<evidence type="ECO:0000256" key="2">
    <source>
        <dbReference type="SAM" id="MobiDB-lite"/>
    </source>
</evidence>
<gene>
    <name evidence="1" type="primary">mutL</name>
    <name type="ordered locus">CPS_0323</name>
</gene>
<proteinExistence type="inferred from homology"/>
<reference key="1">
    <citation type="journal article" date="2005" name="Proc. Natl. Acad. Sci. U.S.A.">
        <title>The psychrophilic lifestyle as revealed by the genome sequence of Colwellia psychrerythraea 34H through genomic and proteomic analyses.</title>
        <authorList>
            <person name="Methe B.A."/>
            <person name="Nelson K.E."/>
            <person name="Deming J.W."/>
            <person name="Momen B."/>
            <person name="Melamud E."/>
            <person name="Zhang X."/>
            <person name="Moult J."/>
            <person name="Madupu R."/>
            <person name="Nelson W.C."/>
            <person name="Dodson R.J."/>
            <person name="Brinkac L.M."/>
            <person name="Daugherty S.C."/>
            <person name="Durkin A.S."/>
            <person name="DeBoy R.T."/>
            <person name="Kolonay J.F."/>
            <person name="Sullivan S.A."/>
            <person name="Zhou L."/>
            <person name="Davidsen T.M."/>
            <person name="Wu M."/>
            <person name="Huston A.L."/>
            <person name="Lewis M."/>
            <person name="Weaver B."/>
            <person name="Weidman J.F."/>
            <person name="Khouri H."/>
            <person name="Utterback T.R."/>
            <person name="Feldblyum T.V."/>
            <person name="Fraser C.M."/>
        </authorList>
    </citation>
    <scope>NUCLEOTIDE SEQUENCE [LARGE SCALE GENOMIC DNA]</scope>
    <source>
        <strain>34H / ATCC BAA-681</strain>
    </source>
</reference>
<feature type="chain" id="PRO_1000071504" description="DNA mismatch repair protein MutL">
    <location>
        <begin position="1"/>
        <end position="652"/>
    </location>
</feature>
<feature type="region of interest" description="Disordered" evidence="2">
    <location>
        <begin position="357"/>
        <end position="377"/>
    </location>
</feature>
<feature type="region of interest" description="Disordered" evidence="2">
    <location>
        <begin position="425"/>
        <end position="457"/>
    </location>
</feature>
<feature type="compositionally biased region" description="Polar residues" evidence="2">
    <location>
        <begin position="365"/>
        <end position="375"/>
    </location>
</feature>
<comment type="function">
    <text evidence="1">This protein is involved in the repair of mismatches in DNA. It is required for dam-dependent methyl-directed DNA mismatch repair. May act as a 'molecular matchmaker', a protein that promotes the formation of a stable complex between two or more DNA-binding proteins in an ATP-dependent manner without itself being part of a final effector complex.</text>
</comment>
<comment type="similarity">
    <text evidence="1">Belongs to the DNA mismatch repair MutL/HexB family.</text>
</comment>
<organism>
    <name type="scientific">Colwellia psychrerythraea (strain 34H / ATCC BAA-681)</name>
    <name type="common">Vibrio psychroerythus</name>
    <dbReference type="NCBI Taxonomy" id="167879"/>
    <lineage>
        <taxon>Bacteria</taxon>
        <taxon>Pseudomonadati</taxon>
        <taxon>Pseudomonadota</taxon>
        <taxon>Gammaproteobacteria</taxon>
        <taxon>Alteromonadales</taxon>
        <taxon>Colwelliaceae</taxon>
        <taxon>Colwellia</taxon>
    </lineage>
</organism>
<keyword id="KW-0227">DNA damage</keyword>
<keyword id="KW-0234">DNA repair</keyword>
<dbReference type="EMBL" id="CP000083">
    <property type="protein sequence ID" value="AAZ26944.1"/>
    <property type="molecule type" value="Genomic_DNA"/>
</dbReference>
<dbReference type="RefSeq" id="WP_011041196.1">
    <property type="nucleotide sequence ID" value="NC_003910.7"/>
</dbReference>
<dbReference type="SMR" id="Q48A24"/>
<dbReference type="STRING" id="167879.CPS_0323"/>
<dbReference type="KEGG" id="cps:CPS_0323"/>
<dbReference type="HOGENOM" id="CLU_004131_5_1_6"/>
<dbReference type="Proteomes" id="UP000000547">
    <property type="component" value="Chromosome"/>
</dbReference>
<dbReference type="GO" id="GO:0032300">
    <property type="term" value="C:mismatch repair complex"/>
    <property type="evidence" value="ECO:0007669"/>
    <property type="project" value="InterPro"/>
</dbReference>
<dbReference type="GO" id="GO:0005524">
    <property type="term" value="F:ATP binding"/>
    <property type="evidence" value="ECO:0007669"/>
    <property type="project" value="InterPro"/>
</dbReference>
<dbReference type="GO" id="GO:0016887">
    <property type="term" value="F:ATP hydrolysis activity"/>
    <property type="evidence" value="ECO:0007669"/>
    <property type="project" value="InterPro"/>
</dbReference>
<dbReference type="GO" id="GO:0140664">
    <property type="term" value="F:ATP-dependent DNA damage sensor activity"/>
    <property type="evidence" value="ECO:0007669"/>
    <property type="project" value="InterPro"/>
</dbReference>
<dbReference type="GO" id="GO:0030983">
    <property type="term" value="F:mismatched DNA binding"/>
    <property type="evidence" value="ECO:0007669"/>
    <property type="project" value="InterPro"/>
</dbReference>
<dbReference type="GO" id="GO:0006298">
    <property type="term" value="P:mismatch repair"/>
    <property type="evidence" value="ECO:0007669"/>
    <property type="project" value="UniProtKB-UniRule"/>
</dbReference>
<dbReference type="CDD" id="cd16926">
    <property type="entry name" value="HATPase_MutL-MLH-PMS-like"/>
    <property type="match status" value="1"/>
</dbReference>
<dbReference type="CDD" id="cd03482">
    <property type="entry name" value="MutL_Trans_MutL"/>
    <property type="match status" value="1"/>
</dbReference>
<dbReference type="FunFam" id="3.30.230.10:FF:000013">
    <property type="entry name" value="DNA mismatch repair endonuclease MutL"/>
    <property type="match status" value="1"/>
</dbReference>
<dbReference type="FunFam" id="3.30.565.10:FF:000003">
    <property type="entry name" value="DNA mismatch repair endonuclease MutL"/>
    <property type="match status" value="1"/>
</dbReference>
<dbReference type="Gene3D" id="3.30.230.10">
    <property type="match status" value="1"/>
</dbReference>
<dbReference type="Gene3D" id="3.30.565.10">
    <property type="entry name" value="Histidine kinase-like ATPase, C-terminal domain"/>
    <property type="match status" value="1"/>
</dbReference>
<dbReference type="Gene3D" id="3.30.1370.100">
    <property type="entry name" value="MutL, C-terminal domain, regulatory subdomain"/>
    <property type="match status" value="1"/>
</dbReference>
<dbReference type="HAMAP" id="MF_00149">
    <property type="entry name" value="DNA_mis_repair"/>
    <property type="match status" value="1"/>
</dbReference>
<dbReference type="InterPro" id="IPR014762">
    <property type="entry name" value="DNA_mismatch_repair_CS"/>
</dbReference>
<dbReference type="InterPro" id="IPR020667">
    <property type="entry name" value="DNA_mismatch_repair_MutL"/>
</dbReference>
<dbReference type="InterPro" id="IPR013507">
    <property type="entry name" value="DNA_mismatch_S5_2-like"/>
</dbReference>
<dbReference type="InterPro" id="IPR036890">
    <property type="entry name" value="HATPase_C_sf"/>
</dbReference>
<dbReference type="InterPro" id="IPR002099">
    <property type="entry name" value="MutL/Mlh/PMS"/>
</dbReference>
<dbReference type="InterPro" id="IPR038973">
    <property type="entry name" value="MutL/Mlh/Pms-like"/>
</dbReference>
<dbReference type="InterPro" id="IPR014790">
    <property type="entry name" value="MutL_C"/>
</dbReference>
<dbReference type="InterPro" id="IPR042121">
    <property type="entry name" value="MutL_C_regsub"/>
</dbReference>
<dbReference type="InterPro" id="IPR037198">
    <property type="entry name" value="MutL_C_sf"/>
</dbReference>
<dbReference type="InterPro" id="IPR020568">
    <property type="entry name" value="Ribosomal_Su5_D2-typ_SF"/>
</dbReference>
<dbReference type="InterPro" id="IPR014721">
    <property type="entry name" value="Ribsml_uS5_D2-typ_fold_subgr"/>
</dbReference>
<dbReference type="NCBIfam" id="TIGR00585">
    <property type="entry name" value="mutl"/>
    <property type="match status" value="1"/>
</dbReference>
<dbReference type="NCBIfam" id="NF000948">
    <property type="entry name" value="PRK00095.1-1"/>
    <property type="match status" value="1"/>
</dbReference>
<dbReference type="PANTHER" id="PTHR10073">
    <property type="entry name" value="DNA MISMATCH REPAIR PROTEIN MLH, PMS, MUTL"/>
    <property type="match status" value="1"/>
</dbReference>
<dbReference type="PANTHER" id="PTHR10073:SF12">
    <property type="entry name" value="DNA MISMATCH REPAIR PROTEIN MLH1"/>
    <property type="match status" value="1"/>
</dbReference>
<dbReference type="Pfam" id="PF01119">
    <property type="entry name" value="DNA_mis_repair"/>
    <property type="match status" value="1"/>
</dbReference>
<dbReference type="Pfam" id="PF13589">
    <property type="entry name" value="HATPase_c_3"/>
    <property type="match status" value="1"/>
</dbReference>
<dbReference type="Pfam" id="PF08676">
    <property type="entry name" value="MutL_C"/>
    <property type="match status" value="1"/>
</dbReference>
<dbReference type="SMART" id="SM01340">
    <property type="entry name" value="DNA_mis_repair"/>
    <property type="match status" value="1"/>
</dbReference>
<dbReference type="SMART" id="SM00853">
    <property type="entry name" value="MutL_C"/>
    <property type="match status" value="1"/>
</dbReference>
<dbReference type="SUPFAM" id="SSF55874">
    <property type="entry name" value="ATPase domain of HSP90 chaperone/DNA topoisomerase II/histidine kinase"/>
    <property type="match status" value="1"/>
</dbReference>
<dbReference type="SUPFAM" id="SSF118116">
    <property type="entry name" value="DNA mismatch repair protein MutL"/>
    <property type="match status" value="1"/>
</dbReference>
<dbReference type="SUPFAM" id="SSF54211">
    <property type="entry name" value="Ribosomal protein S5 domain 2-like"/>
    <property type="match status" value="1"/>
</dbReference>
<dbReference type="PROSITE" id="PS00058">
    <property type="entry name" value="DNA_MISMATCH_REPAIR_1"/>
    <property type="match status" value="1"/>
</dbReference>
<sequence>MTIAILPARLANQIAAGEVVERPASVIKELIENSLDAGATSIHIDVDKGGIKKIKITDNGHGIVKEELTLALSRHATSKIKSLNDLEAIGSLGFRGEALASISSVARLTLTSKPQSQATAWQAVAEGRDMSVNIKPAAHPDGTSIEVLDLFFNTPARRKFLRTEKTEFNHIDEVVRRIALAHFEVSFSLTHNGNTVRQYRMASTHAQCIKRVAMVCGPKFIEHAVEVDCPHDNMTLSGWLAKPSFSRSQNDLCYSYVNGRMMRDKLINHAIRQAYADLLPPDTYPAFVLFLQLDHREVDVNVHPSKHEVRFHQSRYVHDFIYSVCHKALTSALAGEELFTTADSDLALVPEQSYSSLGANDRQGSHSSNTPTLNYPSADYIRPLQHVNDASNSQSTSSYSGYGQQHKTNAISKIAASNYQALMTPDKGSSAQVQNTSGSDQASAQKHETTTLQNSTDQSAFLSVHQPGYALYKTENGVRVLSLFKLAKSTYGKLVEQSWQNKTEQSDCPVECLVSQPLLLPVILSLSEQQLSFVLAEQEILSNAGIVFIQQHKNKIQIRQFPALLREQDVSNALIIIIEELIEKRSFTEGEALCETNLHQSIGLAMVLAEYDETQADILLRLTKKLFHEQLSQQLLLNSIPLDLTSHIKTLF</sequence>
<accession>Q48A24</accession>
<name>MUTL_COLP3</name>
<protein>
    <recommendedName>
        <fullName evidence="1">DNA mismatch repair protein MutL</fullName>
    </recommendedName>
</protein>